<comment type="function">
    <text evidence="3 5">Component of the integrator complex, a multiprotein complex that terminates RNA polymerase II (Pol II) transcription in the promoter-proximal region of genes (PubMed:23097424, PubMed:32966759). The integrator complex provides a quality checkpoint during transcription elongation by driving premature transcription termination of transcripts that are unfavorably configured for transcriptional elongation: the complex terminates transcription by (1) catalyzing dephosphorylation of the C-terminal domain (CTD) of Pol II subunit Polr2A/Rbp1 and Spt5, and (2) degrading the exiting nascent RNA transcript via endonuclease activity (PubMed:32966759). The integrator complex is also involved in the 3'-end processing of the U7 snRNA, and also the spliceosomal snRNAs U1, U2, U4 and U5 (PubMed:23097424).</text>
</comment>
<comment type="subunit">
    <text evidence="3 4 5 6 7">Belongs to the multiprotein complex Integrator, at least composed of IntS1, IntS2, IntS3, IntS4, omd/IntS5, IntS6, defl/IntS7, IntS8, IntS9, IntS10, IntS11, IntS12, asun/IntS13, IntS14 and IntS15 (PubMed:23097424, PubMed:31530651, PubMed:32966759, PubMed:37995689, PubMed:39032490). The core complex associates with protein phosphatase 2A subunits mts/PP2A and Pp2A-29B, to form the Integrator-PP2A (INTAC) complex (PubMed:32966759, PubMed:37995689).</text>
</comment>
<comment type="subcellular location">
    <subcellularLocation>
        <location evidence="3 7">Nucleus</location>
    </subcellularLocation>
</comment>
<comment type="similarity">
    <text evidence="10">Belongs to the Integrator subunit 14 family.</text>
</comment>
<keyword id="KW-0539">Nucleus</keyword>
<keyword id="KW-1185">Reference proteome</keyword>
<gene>
    <name evidence="9 12" type="primary">IntS14</name>
    <name evidence="12" type="ORF">CG4785</name>
</gene>
<reference evidence="13" key="1">
    <citation type="journal article" date="2000" name="Science">
        <title>The genome sequence of Drosophila melanogaster.</title>
        <authorList>
            <person name="Adams M.D."/>
            <person name="Celniker S.E."/>
            <person name="Holt R.A."/>
            <person name="Evans C.A."/>
            <person name="Gocayne J.D."/>
            <person name="Amanatides P.G."/>
            <person name="Scherer S.E."/>
            <person name="Li P.W."/>
            <person name="Hoskins R.A."/>
            <person name="Galle R.F."/>
            <person name="George R.A."/>
            <person name="Lewis S.E."/>
            <person name="Richards S."/>
            <person name="Ashburner M."/>
            <person name="Henderson S.N."/>
            <person name="Sutton G.G."/>
            <person name="Wortman J.R."/>
            <person name="Yandell M.D."/>
            <person name="Zhang Q."/>
            <person name="Chen L.X."/>
            <person name="Brandon R.C."/>
            <person name="Rogers Y.-H.C."/>
            <person name="Blazej R.G."/>
            <person name="Champe M."/>
            <person name="Pfeiffer B.D."/>
            <person name="Wan K.H."/>
            <person name="Doyle C."/>
            <person name="Baxter E.G."/>
            <person name="Helt G."/>
            <person name="Nelson C.R."/>
            <person name="Miklos G.L.G."/>
            <person name="Abril J.F."/>
            <person name="Agbayani A."/>
            <person name="An H.-J."/>
            <person name="Andrews-Pfannkoch C."/>
            <person name="Baldwin D."/>
            <person name="Ballew R.M."/>
            <person name="Basu A."/>
            <person name="Baxendale J."/>
            <person name="Bayraktaroglu L."/>
            <person name="Beasley E.M."/>
            <person name="Beeson K.Y."/>
            <person name="Benos P.V."/>
            <person name="Berman B.P."/>
            <person name="Bhandari D."/>
            <person name="Bolshakov S."/>
            <person name="Borkova D."/>
            <person name="Botchan M.R."/>
            <person name="Bouck J."/>
            <person name="Brokstein P."/>
            <person name="Brottier P."/>
            <person name="Burtis K.C."/>
            <person name="Busam D.A."/>
            <person name="Butler H."/>
            <person name="Cadieu E."/>
            <person name="Center A."/>
            <person name="Chandra I."/>
            <person name="Cherry J.M."/>
            <person name="Cawley S."/>
            <person name="Dahlke C."/>
            <person name="Davenport L.B."/>
            <person name="Davies P."/>
            <person name="de Pablos B."/>
            <person name="Delcher A."/>
            <person name="Deng Z."/>
            <person name="Mays A.D."/>
            <person name="Dew I."/>
            <person name="Dietz S.M."/>
            <person name="Dodson K."/>
            <person name="Doup L.E."/>
            <person name="Downes M."/>
            <person name="Dugan-Rocha S."/>
            <person name="Dunkov B.C."/>
            <person name="Dunn P."/>
            <person name="Durbin K.J."/>
            <person name="Evangelista C.C."/>
            <person name="Ferraz C."/>
            <person name="Ferriera S."/>
            <person name="Fleischmann W."/>
            <person name="Fosler C."/>
            <person name="Gabrielian A.E."/>
            <person name="Garg N.S."/>
            <person name="Gelbart W.M."/>
            <person name="Glasser K."/>
            <person name="Glodek A."/>
            <person name="Gong F."/>
            <person name="Gorrell J.H."/>
            <person name="Gu Z."/>
            <person name="Guan P."/>
            <person name="Harris M."/>
            <person name="Harris N.L."/>
            <person name="Harvey D.A."/>
            <person name="Heiman T.J."/>
            <person name="Hernandez J.R."/>
            <person name="Houck J."/>
            <person name="Hostin D."/>
            <person name="Houston K.A."/>
            <person name="Howland T.J."/>
            <person name="Wei M.-H."/>
            <person name="Ibegwam C."/>
            <person name="Jalali M."/>
            <person name="Kalush F."/>
            <person name="Karpen G.H."/>
            <person name="Ke Z."/>
            <person name="Kennison J.A."/>
            <person name="Ketchum K.A."/>
            <person name="Kimmel B.E."/>
            <person name="Kodira C.D."/>
            <person name="Kraft C.L."/>
            <person name="Kravitz S."/>
            <person name="Kulp D."/>
            <person name="Lai Z."/>
            <person name="Lasko P."/>
            <person name="Lei Y."/>
            <person name="Levitsky A.A."/>
            <person name="Li J.H."/>
            <person name="Li Z."/>
            <person name="Liang Y."/>
            <person name="Lin X."/>
            <person name="Liu X."/>
            <person name="Mattei B."/>
            <person name="McIntosh T.C."/>
            <person name="McLeod M.P."/>
            <person name="McPherson D."/>
            <person name="Merkulov G."/>
            <person name="Milshina N.V."/>
            <person name="Mobarry C."/>
            <person name="Morris J."/>
            <person name="Moshrefi A."/>
            <person name="Mount S.M."/>
            <person name="Moy M."/>
            <person name="Murphy B."/>
            <person name="Murphy L."/>
            <person name="Muzny D.M."/>
            <person name="Nelson D.L."/>
            <person name="Nelson D.R."/>
            <person name="Nelson K.A."/>
            <person name="Nixon K."/>
            <person name="Nusskern D.R."/>
            <person name="Pacleb J.M."/>
            <person name="Palazzolo M."/>
            <person name="Pittman G.S."/>
            <person name="Pan S."/>
            <person name="Pollard J."/>
            <person name="Puri V."/>
            <person name="Reese M.G."/>
            <person name="Reinert K."/>
            <person name="Remington K."/>
            <person name="Saunders R.D.C."/>
            <person name="Scheeler F."/>
            <person name="Shen H."/>
            <person name="Shue B.C."/>
            <person name="Siden-Kiamos I."/>
            <person name="Simpson M."/>
            <person name="Skupski M.P."/>
            <person name="Smith T.J."/>
            <person name="Spier E."/>
            <person name="Spradling A.C."/>
            <person name="Stapleton M."/>
            <person name="Strong R."/>
            <person name="Sun E."/>
            <person name="Svirskas R."/>
            <person name="Tector C."/>
            <person name="Turner R."/>
            <person name="Venter E."/>
            <person name="Wang A.H."/>
            <person name="Wang X."/>
            <person name="Wang Z.-Y."/>
            <person name="Wassarman D.A."/>
            <person name="Weinstock G.M."/>
            <person name="Weissenbach J."/>
            <person name="Williams S.M."/>
            <person name="Woodage T."/>
            <person name="Worley K.C."/>
            <person name="Wu D."/>
            <person name="Yang S."/>
            <person name="Yao Q.A."/>
            <person name="Ye J."/>
            <person name="Yeh R.-F."/>
            <person name="Zaveri J.S."/>
            <person name="Zhan M."/>
            <person name="Zhang G."/>
            <person name="Zhao Q."/>
            <person name="Zheng L."/>
            <person name="Zheng X.H."/>
            <person name="Zhong F.N."/>
            <person name="Zhong W."/>
            <person name="Zhou X."/>
            <person name="Zhu S.C."/>
            <person name="Zhu X."/>
            <person name="Smith H.O."/>
            <person name="Gibbs R.A."/>
            <person name="Myers E.W."/>
            <person name="Rubin G.M."/>
            <person name="Venter J.C."/>
        </authorList>
    </citation>
    <scope>NUCLEOTIDE SEQUENCE [LARGE SCALE GENOMIC DNA]</scope>
    <source>
        <strain evidence="13">Berkeley</strain>
    </source>
</reference>
<reference evidence="13" key="2">
    <citation type="journal article" date="2002" name="Genome Biol.">
        <title>Annotation of the Drosophila melanogaster euchromatic genome: a systematic review.</title>
        <authorList>
            <person name="Misra S."/>
            <person name="Crosby M.A."/>
            <person name="Mungall C.J."/>
            <person name="Matthews B.B."/>
            <person name="Campbell K.S."/>
            <person name="Hradecky P."/>
            <person name="Huang Y."/>
            <person name="Kaminker J.S."/>
            <person name="Millburn G.H."/>
            <person name="Prochnik S.E."/>
            <person name="Smith C.D."/>
            <person name="Tupy J.L."/>
            <person name="Whitfield E.J."/>
            <person name="Bayraktaroglu L."/>
            <person name="Berman B.P."/>
            <person name="Bettencourt B.R."/>
            <person name="Celniker S.E."/>
            <person name="de Grey A.D.N.J."/>
            <person name="Drysdale R.A."/>
            <person name="Harris N.L."/>
            <person name="Richter J."/>
            <person name="Russo S."/>
            <person name="Schroeder A.J."/>
            <person name="Shu S.Q."/>
            <person name="Stapleton M."/>
            <person name="Yamada C."/>
            <person name="Ashburner M."/>
            <person name="Gelbart W.M."/>
            <person name="Rubin G.M."/>
            <person name="Lewis S.E."/>
        </authorList>
    </citation>
    <scope>GENOME REANNOTATION</scope>
    <source>
        <strain evidence="13">Berkeley</strain>
    </source>
</reference>
<reference evidence="11" key="3">
    <citation type="journal article" date="2002" name="Genome Biol.">
        <title>A Drosophila full-length cDNA resource.</title>
        <authorList>
            <person name="Stapleton M."/>
            <person name="Carlson J.W."/>
            <person name="Brokstein P."/>
            <person name="Yu C."/>
            <person name="Champe M."/>
            <person name="George R.A."/>
            <person name="Guarin H."/>
            <person name="Kronmiller B."/>
            <person name="Pacleb J.M."/>
            <person name="Park S."/>
            <person name="Wan K.H."/>
            <person name="Rubin G.M."/>
            <person name="Celniker S.E."/>
        </authorList>
    </citation>
    <scope>NUCLEOTIDE SEQUENCE [LARGE SCALE MRNA]</scope>
    <source>
        <strain evidence="11">Berkeley</strain>
        <tissue evidence="11">Embryo</tissue>
    </source>
</reference>
<reference evidence="10" key="4">
    <citation type="journal article" date="2012" name="RNA">
        <title>An RNAi screen identifies additional members of the Drosophila Integrator complex and a requirement for cyclin C/Cdk8 in snRNA 3'-end formation.</title>
        <authorList>
            <person name="Chen J."/>
            <person name="Ezzeddine N."/>
            <person name="Waltenspiel B."/>
            <person name="Albrecht T.R."/>
            <person name="Warren W.D."/>
            <person name="Marzluff W.F."/>
            <person name="Wagner E.J."/>
        </authorList>
    </citation>
    <scope>FUNCTION</scope>
    <scope>SUBCELLULAR LOCATION</scope>
    <scope>SUBUNIT</scope>
    <scope>IDENTIFICATION IN THE INTEGRATOR COMPLEX</scope>
</reference>
<reference key="5">
    <citation type="journal article" date="2019" name="Genes Dev.">
        <title>The Integrator complex cleaves nascent mRNAs to attenuate transcription.</title>
        <authorList>
            <person name="Tatomer D.C."/>
            <person name="Elrod N.D."/>
            <person name="Liang D."/>
            <person name="Xiao M.S."/>
            <person name="Jiang J.Z."/>
            <person name="Jonathan M."/>
            <person name="Huang K.L."/>
            <person name="Wagner E.J."/>
            <person name="Cherry S."/>
            <person name="Wilusz J.E."/>
        </authorList>
    </citation>
    <scope>IDENTIFICATION IN THE INTEGRATOR COMPLEX</scope>
</reference>
<reference key="6">
    <citation type="journal article" date="2020" name="Mol. Cell">
        <title>Integrator recruits protein phosphatase 2A to prevent pause release and facilitate transcription termination.</title>
        <authorList>
            <person name="Huang K.L."/>
            <person name="Jee D."/>
            <person name="Stein C.B."/>
            <person name="Elrod N.D."/>
            <person name="Henriques T."/>
            <person name="Mascibroda L.G."/>
            <person name="Baillat D."/>
            <person name="Russell W.K."/>
            <person name="Adelman K."/>
            <person name="Wagner E.J."/>
        </authorList>
    </citation>
    <scope>FUNCTION</scope>
    <scope>IDENTIFICATION IN THE INTAC COMPLEX</scope>
</reference>
<reference key="7">
    <citation type="journal article" date="2023" name="Mol. Cell">
        <title>IntS6 and the Integrator phosphatase module tune the efficiency of select premature transcription termination events.</title>
        <authorList>
            <person name="Fujiwara R."/>
            <person name="Zhai S.N."/>
            <person name="Liang D."/>
            <person name="Shah A.P."/>
            <person name="Tracey M."/>
            <person name="Ma X.K."/>
            <person name="Fields C.J."/>
            <person name="Mendoza-Figueroa M.S."/>
            <person name="Meline M.C."/>
            <person name="Tatomer D.C."/>
            <person name="Yang L."/>
            <person name="Wilusz J.E."/>
        </authorList>
    </citation>
    <scope>IDENTIFICATION IN THE INTAC COMPLEX</scope>
</reference>
<reference key="8">
    <citation type="journal article" date="2024" name="Mol. Cell">
        <title>Cytoplasmic binding partners of the Integrator endonuclease INTS11 and its paralog CPSF73 are required for their nuclear function.</title>
        <authorList>
            <person name="Lin M.H."/>
            <person name="Jensen M.K."/>
            <person name="Elrod N.D."/>
            <person name="Chu H.F."/>
            <person name="Haseley M."/>
            <person name="Beam A.C."/>
            <person name="Huang K.L."/>
            <person name="Chiang W."/>
            <person name="Russell W.K."/>
            <person name="Williams K."/>
            <person name="Proschel C."/>
            <person name="Wagner E.J."/>
            <person name="Tong L."/>
        </authorList>
    </citation>
    <scope>IDENTIFICATION IN THE INTEGRATOR COMPLEX</scope>
    <scope>SUBCELLULAR LOCATION</scope>
</reference>
<sequence length="587" mass="65049">MPTLIALDASLSMLRPVPGRNEHTYQSLATKGIQHLLDNLTAAGKLEHVALLSYSTTAELKVDFTRDYDQVRQAVKKVEPVDKACLMSMLKAVVSIMSPWGNQNILQVVVFTDCGLGFGNTSITGFLEAYAEKESEPEFGFLKTLANYNLNFICLGLHGDYYFTRGLAVYQQLLDKVSLKGQLFMTKPAKSSDAVEGNPNPNPNPSHKSELGRTTVFELIERLCEASYKSSEVTLKCGSYFRMEASVLLWPPTAPYEQKSHIFGREPTIRHTDQKIEVCGFLSLSDIGSPATLSRHWVLPKVEREKSGSSRRSGNLSAAAKPPKLNLDTSNPNYELEKLEADIKEFYAKDSKDTEESGDDDVTIVLKPGPQTEQQKENLCVLLHGALKMENMAALVRVGDKWYGFIYAFTDSKKKSNLMLNILPPGTNVIPWLGDLESLGFPEDLAPGETASFPVRADRRSYSQSSVVWIRQASLQSDVQKVLRHAKKMPDKTQHFYKELNRIRRAALALGFVELLEALAMLLEKECAHLSLNGASNDCTLQLQHAATELRKTSNRDMKSMIVPLQKVGASDAGSTAATAPAPAYMY</sequence>
<organism evidence="13">
    <name type="scientific">Drosophila melanogaster</name>
    <name type="common">Fruit fly</name>
    <dbReference type="NCBI Taxonomy" id="7227"/>
    <lineage>
        <taxon>Eukaryota</taxon>
        <taxon>Metazoa</taxon>
        <taxon>Ecdysozoa</taxon>
        <taxon>Arthropoda</taxon>
        <taxon>Hexapoda</taxon>
        <taxon>Insecta</taxon>
        <taxon>Pterygota</taxon>
        <taxon>Neoptera</taxon>
        <taxon>Endopterygota</taxon>
        <taxon>Diptera</taxon>
        <taxon>Brachycera</taxon>
        <taxon>Muscomorpha</taxon>
        <taxon>Ephydroidea</taxon>
        <taxon>Drosophilidae</taxon>
        <taxon>Drosophila</taxon>
        <taxon>Sophophora</taxon>
    </lineage>
</organism>
<feature type="chain" id="PRO_0000437671" description="Integrator complex subunit 14">
    <location>
        <begin position="1"/>
        <end position="587"/>
    </location>
</feature>
<feature type="domain" description="VWFA" evidence="1">
    <location>
        <begin position="3"/>
        <end position="113"/>
    </location>
</feature>
<feature type="region of interest" description="Disordered" evidence="2">
    <location>
        <begin position="190"/>
        <end position="211"/>
    </location>
</feature>
<feature type="region of interest" description="Disordered" evidence="2">
    <location>
        <begin position="304"/>
        <end position="331"/>
    </location>
</feature>
<proteinExistence type="evidence at protein level"/>
<accession>Q9VPY0</accession>
<name>INT14_DROME</name>
<dbReference type="EMBL" id="AE014134">
    <property type="protein sequence ID" value="AAF51404.1"/>
    <property type="molecule type" value="Genomic_DNA"/>
</dbReference>
<dbReference type="EMBL" id="AY118537">
    <property type="protein sequence ID" value="AAM49906.1"/>
    <property type="molecule type" value="mRNA"/>
</dbReference>
<dbReference type="RefSeq" id="NP_608579.1">
    <property type="nucleotide sequence ID" value="NM_134735.2"/>
</dbReference>
<dbReference type="SMR" id="Q9VPY0"/>
<dbReference type="FunCoup" id="Q9VPY0">
    <property type="interactions" value="2659"/>
</dbReference>
<dbReference type="IntAct" id="Q9VPY0">
    <property type="interactions" value="2"/>
</dbReference>
<dbReference type="STRING" id="7227.FBpp0077627"/>
<dbReference type="PaxDb" id="7227-FBpp0077627"/>
<dbReference type="DNASU" id="33300"/>
<dbReference type="EnsemblMetazoa" id="FBtr0077962">
    <property type="protein sequence ID" value="FBpp0077627"/>
    <property type="gene ID" value="FBgn0031314"/>
</dbReference>
<dbReference type="GeneID" id="33300"/>
<dbReference type="KEGG" id="dme:Dmel_CG4785"/>
<dbReference type="UCSC" id="CG4785-RA">
    <property type="organism name" value="d. melanogaster"/>
</dbReference>
<dbReference type="AGR" id="FB:FBgn0031314"/>
<dbReference type="CTD" id="81556"/>
<dbReference type="FlyBase" id="FBgn0031314">
    <property type="gene designation" value="IntS14"/>
</dbReference>
<dbReference type="VEuPathDB" id="VectorBase:FBgn0031314"/>
<dbReference type="eggNOG" id="ENOG502QQ37">
    <property type="taxonomic scope" value="Eukaryota"/>
</dbReference>
<dbReference type="GeneTree" id="ENSGT00390000009486"/>
<dbReference type="HOGENOM" id="CLU_041485_0_0_1"/>
<dbReference type="InParanoid" id="Q9VPY0"/>
<dbReference type="OMA" id="QSSVVWI"/>
<dbReference type="OrthoDB" id="2374335at2759"/>
<dbReference type="PhylomeDB" id="Q9VPY0"/>
<dbReference type="Reactome" id="R-DME-6807505">
    <property type="pathway name" value="RNA polymerase II transcribes snRNA genes"/>
</dbReference>
<dbReference type="SignaLink" id="Q9VPY0"/>
<dbReference type="BioGRID-ORCS" id="33300">
    <property type="hits" value="0 hits in 1 CRISPR screen"/>
</dbReference>
<dbReference type="ChiTaRS" id="IntS14">
    <property type="organism name" value="fly"/>
</dbReference>
<dbReference type="GenomeRNAi" id="33300"/>
<dbReference type="PRO" id="PR:Q9VPY0"/>
<dbReference type="Proteomes" id="UP000000803">
    <property type="component" value="Chromosome 2L"/>
</dbReference>
<dbReference type="Bgee" id="FBgn0031314">
    <property type="expression patterns" value="Expressed in T neuron T5a (Drosophila) in embryonic/larval optic lobe (Drosophila) and 33 other cell types or tissues"/>
</dbReference>
<dbReference type="GO" id="GO:0160232">
    <property type="term" value="C:INTAC complex"/>
    <property type="evidence" value="ECO:0000314"/>
    <property type="project" value="UniProtKB"/>
</dbReference>
<dbReference type="GO" id="GO:0032039">
    <property type="term" value="C:integrator complex"/>
    <property type="evidence" value="ECO:0000314"/>
    <property type="project" value="UniProtKB"/>
</dbReference>
<dbReference type="GO" id="GO:0005634">
    <property type="term" value="C:nucleus"/>
    <property type="evidence" value="ECO:0000314"/>
    <property type="project" value="FlyBase"/>
</dbReference>
<dbReference type="GO" id="GO:0160240">
    <property type="term" value="P:RNA polymerase II transcription initiation surveillance"/>
    <property type="evidence" value="ECO:0000314"/>
    <property type="project" value="UniProtKB"/>
</dbReference>
<dbReference type="GO" id="GO:0034472">
    <property type="term" value="P:snRNA 3'-end processing"/>
    <property type="evidence" value="ECO:0000314"/>
    <property type="project" value="FlyBase"/>
</dbReference>
<dbReference type="Gene3D" id="3.40.50.410">
    <property type="entry name" value="von Willebrand factor, type A domain"/>
    <property type="match status" value="1"/>
</dbReference>
<dbReference type="InterPro" id="IPR039841">
    <property type="entry name" value="INTS14"/>
</dbReference>
<dbReference type="InterPro" id="IPR045814">
    <property type="entry name" value="IntS14_b-barrel"/>
</dbReference>
<dbReference type="InterPro" id="IPR046471">
    <property type="entry name" value="IntS14_C"/>
</dbReference>
<dbReference type="InterPro" id="IPR002035">
    <property type="entry name" value="VWF_A"/>
</dbReference>
<dbReference type="InterPro" id="IPR036465">
    <property type="entry name" value="vWFA_dom_sf"/>
</dbReference>
<dbReference type="PANTHER" id="PTHR13532">
    <property type="match status" value="1"/>
</dbReference>
<dbReference type="PANTHER" id="PTHR13532:SF3">
    <property type="entry name" value="INTEGRATOR COMPLEX SUBUNIT 14"/>
    <property type="match status" value="1"/>
</dbReference>
<dbReference type="Pfam" id="PF19435">
    <property type="entry name" value="IntS14_b-barrel"/>
    <property type="match status" value="2"/>
</dbReference>
<dbReference type="Pfam" id="PF20504">
    <property type="entry name" value="IntS14_C"/>
    <property type="match status" value="1"/>
</dbReference>
<dbReference type="Pfam" id="PF13519">
    <property type="entry name" value="VWA_2"/>
    <property type="match status" value="1"/>
</dbReference>
<dbReference type="SUPFAM" id="SSF53300">
    <property type="entry name" value="vWA-like"/>
    <property type="match status" value="1"/>
</dbReference>
<evidence type="ECO:0000255" key="1"/>
<evidence type="ECO:0000256" key="2">
    <source>
        <dbReference type="SAM" id="MobiDB-lite"/>
    </source>
</evidence>
<evidence type="ECO:0000269" key="3">
    <source>
    </source>
</evidence>
<evidence type="ECO:0000269" key="4">
    <source>
    </source>
</evidence>
<evidence type="ECO:0000269" key="5">
    <source>
    </source>
</evidence>
<evidence type="ECO:0000269" key="6">
    <source>
    </source>
</evidence>
<evidence type="ECO:0000269" key="7">
    <source>
    </source>
</evidence>
<evidence type="ECO:0000303" key="8">
    <source>
    </source>
</evidence>
<evidence type="ECO:0000303" key="9">
    <source>
    </source>
</evidence>
<evidence type="ECO:0000305" key="10"/>
<evidence type="ECO:0000312" key="11">
    <source>
        <dbReference type="EMBL" id="AAM49906.1"/>
    </source>
</evidence>
<evidence type="ECO:0000312" key="12">
    <source>
        <dbReference type="FlyBase" id="FBgn0031314"/>
    </source>
</evidence>
<evidence type="ECO:0000312" key="13">
    <source>
        <dbReference type="Proteomes" id="UP000000803"/>
    </source>
</evidence>
<protein>
    <recommendedName>
        <fullName evidence="8">Integrator complex subunit 14</fullName>
    </recommendedName>
</protein>